<organism>
    <name type="scientific">Staphylococcus aureus (strain JH9)</name>
    <dbReference type="NCBI Taxonomy" id="359786"/>
    <lineage>
        <taxon>Bacteria</taxon>
        <taxon>Bacillati</taxon>
        <taxon>Bacillota</taxon>
        <taxon>Bacilli</taxon>
        <taxon>Bacillales</taxon>
        <taxon>Staphylococcaceae</taxon>
        <taxon>Staphylococcus</taxon>
    </lineage>
</organism>
<keyword id="KW-0963">Cytoplasm</keyword>
<keyword id="KW-0328">Glycosyltransferase</keyword>
<keyword id="KW-0660">Purine salvage</keyword>
<keyword id="KW-0808">Transferase</keyword>
<accession>A5IPW7</accession>
<feature type="chain" id="PRO_0000339744" description="Xanthine phosphoribosyltransferase">
    <location>
        <begin position="1"/>
        <end position="192"/>
    </location>
</feature>
<feature type="binding site" evidence="1">
    <location>
        <position position="20"/>
    </location>
    <ligand>
        <name>xanthine</name>
        <dbReference type="ChEBI" id="CHEBI:17712"/>
    </ligand>
</feature>
<feature type="binding site" evidence="1">
    <location>
        <position position="27"/>
    </location>
    <ligand>
        <name>xanthine</name>
        <dbReference type="ChEBI" id="CHEBI:17712"/>
    </ligand>
</feature>
<feature type="binding site" evidence="1">
    <location>
        <begin position="128"/>
        <end position="132"/>
    </location>
    <ligand>
        <name>5-phospho-alpha-D-ribose 1-diphosphate</name>
        <dbReference type="ChEBI" id="CHEBI:58017"/>
    </ligand>
</feature>
<feature type="binding site" evidence="1">
    <location>
        <position position="156"/>
    </location>
    <ligand>
        <name>xanthine</name>
        <dbReference type="ChEBI" id="CHEBI:17712"/>
    </ligand>
</feature>
<sequence length="192" mass="20926">MELLGQKVKEDGVVIDEKILKVDGFLNHQIDAKLMNEVGRTFYEQFKDKGITKILTIEASGIAPAIMAALHFDVPCLFAKKAKPSTLTDGYYETSIHSFTKNKTSTVIVSKEFLSEEDTVLIIDDFLANGDASLGLYDIAQQANAKTAGIGIVVEKSFQNGHQRLEEAGLTVSSLCKVASLEGNKVTLVVEE</sequence>
<gene>
    <name evidence="1" type="primary">xpt</name>
    <name type="ordered locus">SaurJH9_0435</name>
</gene>
<comment type="function">
    <text evidence="1">Converts the preformed base xanthine, a product of nucleic acid breakdown, to xanthosine 5'-monophosphate (XMP), so it can be reused for RNA or DNA synthesis.</text>
</comment>
<comment type="catalytic activity">
    <reaction evidence="1">
        <text>XMP + diphosphate = xanthine + 5-phospho-alpha-D-ribose 1-diphosphate</text>
        <dbReference type="Rhea" id="RHEA:10800"/>
        <dbReference type="ChEBI" id="CHEBI:17712"/>
        <dbReference type="ChEBI" id="CHEBI:33019"/>
        <dbReference type="ChEBI" id="CHEBI:57464"/>
        <dbReference type="ChEBI" id="CHEBI:58017"/>
        <dbReference type="EC" id="2.4.2.22"/>
    </reaction>
</comment>
<comment type="pathway">
    <text evidence="1">Purine metabolism; XMP biosynthesis via salvage pathway; XMP from xanthine: step 1/1.</text>
</comment>
<comment type="subunit">
    <text evidence="1">Homodimer.</text>
</comment>
<comment type="subcellular location">
    <subcellularLocation>
        <location evidence="1">Cytoplasm</location>
    </subcellularLocation>
</comment>
<comment type="similarity">
    <text evidence="1">Belongs to the purine/pyrimidine phosphoribosyltransferase family. Xpt subfamily.</text>
</comment>
<evidence type="ECO:0000255" key="1">
    <source>
        <dbReference type="HAMAP-Rule" id="MF_01184"/>
    </source>
</evidence>
<name>XPT_STAA9</name>
<proteinExistence type="inferred from homology"/>
<dbReference type="EC" id="2.4.2.22" evidence="1"/>
<dbReference type="EMBL" id="CP000703">
    <property type="protein sequence ID" value="ABQ48240.1"/>
    <property type="molecule type" value="Genomic_DNA"/>
</dbReference>
<dbReference type="RefSeq" id="WP_000421411.1">
    <property type="nucleotide sequence ID" value="NC_009487.1"/>
</dbReference>
<dbReference type="SMR" id="A5IPW7"/>
<dbReference type="KEGG" id="saj:SaurJH9_0435"/>
<dbReference type="HOGENOM" id="CLU_099015_0_0_9"/>
<dbReference type="UniPathway" id="UPA00602">
    <property type="reaction ID" value="UER00658"/>
</dbReference>
<dbReference type="GO" id="GO:0005737">
    <property type="term" value="C:cytoplasm"/>
    <property type="evidence" value="ECO:0007669"/>
    <property type="project" value="UniProtKB-SubCell"/>
</dbReference>
<dbReference type="GO" id="GO:0000310">
    <property type="term" value="F:xanthine phosphoribosyltransferase activity"/>
    <property type="evidence" value="ECO:0007669"/>
    <property type="project" value="UniProtKB-UniRule"/>
</dbReference>
<dbReference type="GO" id="GO:0006166">
    <property type="term" value="P:purine ribonucleoside salvage"/>
    <property type="evidence" value="ECO:0007669"/>
    <property type="project" value="UniProtKB-KW"/>
</dbReference>
<dbReference type="GO" id="GO:0046110">
    <property type="term" value="P:xanthine metabolic process"/>
    <property type="evidence" value="ECO:0007669"/>
    <property type="project" value="InterPro"/>
</dbReference>
<dbReference type="GO" id="GO:0032265">
    <property type="term" value="P:XMP salvage"/>
    <property type="evidence" value="ECO:0007669"/>
    <property type="project" value="UniProtKB-UniRule"/>
</dbReference>
<dbReference type="CDD" id="cd06223">
    <property type="entry name" value="PRTases_typeI"/>
    <property type="match status" value="1"/>
</dbReference>
<dbReference type="Gene3D" id="3.40.50.2020">
    <property type="match status" value="1"/>
</dbReference>
<dbReference type="HAMAP" id="MF_01184">
    <property type="entry name" value="XPRTase"/>
    <property type="match status" value="1"/>
</dbReference>
<dbReference type="InterPro" id="IPR000836">
    <property type="entry name" value="PRibTrfase_dom"/>
</dbReference>
<dbReference type="InterPro" id="IPR029057">
    <property type="entry name" value="PRTase-like"/>
</dbReference>
<dbReference type="InterPro" id="IPR050118">
    <property type="entry name" value="Pur/Pyrimidine_PRTase"/>
</dbReference>
<dbReference type="InterPro" id="IPR010079">
    <property type="entry name" value="Xanthine_PRibTrfase"/>
</dbReference>
<dbReference type="NCBIfam" id="NF006671">
    <property type="entry name" value="PRK09219.1"/>
    <property type="match status" value="1"/>
</dbReference>
<dbReference type="NCBIfam" id="TIGR01744">
    <property type="entry name" value="XPRTase"/>
    <property type="match status" value="1"/>
</dbReference>
<dbReference type="PANTHER" id="PTHR43864">
    <property type="entry name" value="HYPOXANTHINE/GUANINE PHOSPHORIBOSYLTRANSFERASE"/>
    <property type="match status" value="1"/>
</dbReference>
<dbReference type="PANTHER" id="PTHR43864:SF1">
    <property type="entry name" value="XANTHINE PHOSPHORIBOSYLTRANSFERASE"/>
    <property type="match status" value="1"/>
</dbReference>
<dbReference type="SUPFAM" id="SSF53271">
    <property type="entry name" value="PRTase-like"/>
    <property type="match status" value="1"/>
</dbReference>
<reference key="1">
    <citation type="submission" date="2007-05" db="EMBL/GenBank/DDBJ databases">
        <title>Complete sequence of chromosome of Staphylococcus aureus subsp. aureus JH9.</title>
        <authorList>
            <consortium name="US DOE Joint Genome Institute"/>
            <person name="Copeland A."/>
            <person name="Lucas S."/>
            <person name="Lapidus A."/>
            <person name="Barry K."/>
            <person name="Detter J.C."/>
            <person name="Glavina del Rio T."/>
            <person name="Hammon N."/>
            <person name="Israni S."/>
            <person name="Pitluck S."/>
            <person name="Chain P."/>
            <person name="Malfatti S."/>
            <person name="Shin M."/>
            <person name="Vergez L."/>
            <person name="Schmutz J."/>
            <person name="Larimer F."/>
            <person name="Land M."/>
            <person name="Hauser L."/>
            <person name="Kyrpides N."/>
            <person name="Kim E."/>
            <person name="Tomasz A."/>
            <person name="Richardson P."/>
        </authorList>
    </citation>
    <scope>NUCLEOTIDE SEQUENCE [LARGE SCALE GENOMIC DNA]</scope>
    <source>
        <strain>JH9</strain>
    </source>
</reference>
<protein>
    <recommendedName>
        <fullName evidence="1">Xanthine phosphoribosyltransferase</fullName>
        <shortName evidence="1">XPRTase</shortName>
        <ecNumber evidence="1">2.4.2.22</ecNumber>
    </recommendedName>
</protein>